<evidence type="ECO:0000250" key="1">
    <source>
        <dbReference type="UniProtKB" id="Q6UX01"/>
    </source>
</evidence>
<evidence type="ECO:0000250" key="2">
    <source>
        <dbReference type="UniProtKB" id="Q9D1E5"/>
    </source>
</evidence>
<evidence type="ECO:0000255" key="3"/>
<evidence type="ECO:0000305" key="4"/>
<sequence length="489" mass="55048">MEAPDCEVLSVREQLFHERIRECIISTLLFATLYILCHIFLTRFKKPAEFTTVDDADATVNKIALELCTFTLAIALGAVLLLPFSIISNEVLLSLPRNYYIQWLNGSLIHGLWNLVFLFSNLSLIFLMPFAYFFTESEGFAGSRKGVLGRVYETVVMLMLLTLLVLGMVWVASAIVDNNKASRESLYDFWEYYLPYLYSCISFLGVLLLLVCTPLGLARMFSVTGKLLVKPRLLEDLEEQLYCSAFEEAALTRRICNPTSCWLPLDMELLHRQLLALQTQRVLLEKRRKASAWQRNLGYPLAMLCLLVLTGLSVLIVAIHILELLIDEAAMPRGMQGASLGQVSFSKLGSFGAVVQVVLIFYLMVSSVVGFYSSPLFRSLRPRWHDTAMTQIIGNCVCLLVLSSALPVFSRTLGLTRFDLLGDFGRFNWLGNFYIVFLYNAAFAGLTTLCLVKTFTAAVRAELIRAFGLDRLPLPVSGFPRASRKTQHQ</sequence>
<proteinExistence type="evidence at transcript level"/>
<reference key="1">
    <citation type="submission" date="2005-06" db="EMBL/GenBank/DDBJ databases">
        <title>DNA sequences of macaque genes expressed in brain or testis and its evolutionary implications.</title>
        <authorList>
            <consortium name="International consortium for macaque cDNA sequencing and analysis"/>
        </authorList>
    </citation>
    <scope>NUCLEOTIDE SEQUENCE [LARGE SCALE MRNA]</scope>
    <source>
        <tissue>Testis</tissue>
    </source>
</reference>
<comment type="function">
    <text evidence="1 2">Plays an essential role in lymphocyte development by negatively regulating the canonical Wnt signaling pathway (By similarity). In association with UBAC2 and E3 ubiquitin-protein ligase AMFR, promotes the ubiquitin-mediated degradation of CTNNB1 and Wnt receptors FZD6 and LRP6 (By similarity). LMBR1L stabilizes the beta-catenin destruction complex that is required for regulating CTNNB1 levels (By similarity). Acts as a LCN1 receptor and can mediate its endocytosis (By similarity).</text>
</comment>
<comment type="subunit">
    <text evidence="1 2">Dimer (By similarity). Can also form higher oligomers (By similarity). Interacts with LCN1; this interaction mediates the endocytosis of LCN1 (By similarity). Interacts with UBAC2, FAF2, VCP, AMFR, ZNRF3, CTNNB1, LRP6, GSK3A, GSK3B, FZD6, DVL2 and RNF43 (By similarity). Interaction with LGB and SCGB1A1 is controversial (By similarity).</text>
</comment>
<comment type="subcellular location">
    <subcellularLocation>
        <location evidence="1">Cell membrane</location>
        <topology evidence="3">Multi-pass membrane protein</topology>
    </subcellularLocation>
    <subcellularLocation>
        <location evidence="1">Endoplasmic reticulum membrane</location>
        <topology evidence="3">Multi-pass membrane protein</topology>
    </subcellularLocation>
</comment>
<comment type="similarity">
    <text evidence="4">Belongs to the LIMR family.</text>
</comment>
<protein>
    <recommendedName>
        <fullName>Protein LMBR1L</fullName>
    </recommendedName>
    <alternativeName>
        <fullName evidence="1">Lipocalin-1-interacting membrane receptor</fullName>
        <shortName evidence="1">LIMR</shortName>
    </alternativeName>
</protein>
<name>LMBRL_MACFA</name>
<feature type="chain" id="PRO_0000053911" description="Protein LMBR1L">
    <location>
        <begin position="1"/>
        <end position="489"/>
    </location>
</feature>
<feature type="topological domain" description="Extracellular" evidence="3">
    <location>
        <begin position="1"/>
        <end position="21"/>
    </location>
</feature>
<feature type="transmembrane region" description="Helical" evidence="3">
    <location>
        <begin position="22"/>
        <end position="42"/>
    </location>
</feature>
<feature type="topological domain" description="Cytoplasmic" evidence="3">
    <location>
        <begin position="43"/>
        <end position="66"/>
    </location>
</feature>
<feature type="transmembrane region" description="Helical" evidence="3">
    <location>
        <begin position="67"/>
        <end position="87"/>
    </location>
</feature>
<feature type="topological domain" description="Extracellular" evidence="3">
    <location>
        <begin position="88"/>
        <end position="114"/>
    </location>
</feature>
<feature type="transmembrane region" description="Helical" evidence="3">
    <location>
        <begin position="115"/>
        <end position="135"/>
    </location>
</feature>
<feature type="topological domain" description="Cytoplasmic" evidence="3">
    <location>
        <begin position="136"/>
        <end position="154"/>
    </location>
</feature>
<feature type="transmembrane region" description="Helical" evidence="3">
    <location>
        <begin position="155"/>
        <end position="175"/>
    </location>
</feature>
<feature type="topological domain" description="Extracellular" evidence="3">
    <location>
        <begin position="176"/>
        <end position="196"/>
    </location>
</feature>
<feature type="transmembrane region" description="Helical" evidence="3">
    <location>
        <begin position="197"/>
        <end position="217"/>
    </location>
</feature>
<feature type="topological domain" description="Cytoplasmic" evidence="3">
    <location>
        <begin position="218"/>
        <end position="305"/>
    </location>
</feature>
<feature type="transmembrane region" description="Helical" evidence="3">
    <location>
        <begin position="306"/>
        <end position="326"/>
    </location>
</feature>
<feature type="topological domain" description="Extracellular" evidence="3">
    <location>
        <begin position="327"/>
        <end position="350"/>
    </location>
</feature>
<feature type="transmembrane region" description="Helical" evidence="3">
    <location>
        <begin position="351"/>
        <end position="371"/>
    </location>
</feature>
<feature type="topological domain" description="Cytoplasmic" evidence="3">
    <location>
        <begin position="372"/>
        <end position="388"/>
    </location>
</feature>
<feature type="transmembrane region" description="Helical" evidence="3">
    <location>
        <begin position="389"/>
        <end position="409"/>
    </location>
</feature>
<feature type="topological domain" description="Extracellular" evidence="3">
    <location>
        <begin position="410"/>
        <end position="431"/>
    </location>
</feature>
<feature type="transmembrane region" description="Helical" evidence="3">
    <location>
        <begin position="432"/>
        <end position="452"/>
    </location>
</feature>
<feature type="topological domain" description="Cytoplasmic" evidence="3">
    <location>
        <begin position="453"/>
        <end position="489"/>
    </location>
</feature>
<feature type="region of interest" description="LCN1-binding" evidence="1">
    <location>
        <begin position="1"/>
        <end position="76"/>
    </location>
</feature>
<feature type="region of interest" description="Interaction with LGB" evidence="1">
    <location>
        <begin position="1"/>
        <end position="59"/>
    </location>
</feature>
<dbReference type="EMBL" id="AB168682">
    <property type="protein sequence ID" value="BAE00793.1"/>
    <property type="molecule type" value="mRNA"/>
</dbReference>
<dbReference type="RefSeq" id="XP_005570811.1">
    <property type="nucleotide sequence ID" value="XM_005570754.4"/>
</dbReference>
<dbReference type="STRING" id="9541.ENSMFAP00000015658"/>
<dbReference type="Ensembl" id="ENSMFAT00000066199.2">
    <property type="protein sequence ID" value="ENSMFAP00000015672.2"/>
    <property type="gene ID" value="ENSMFAG00000031019.2"/>
</dbReference>
<dbReference type="GeneID" id="102126507"/>
<dbReference type="KEGG" id="mcf:102126507"/>
<dbReference type="CTD" id="55716"/>
<dbReference type="VEuPathDB" id="HostDB:ENSMFAG00000031019"/>
<dbReference type="eggNOG" id="KOG3722">
    <property type="taxonomic scope" value="Eukaryota"/>
</dbReference>
<dbReference type="GeneTree" id="ENSGT00390000007809"/>
<dbReference type="OMA" id="QQRRTWW"/>
<dbReference type="OrthoDB" id="13376at314294"/>
<dbReference type="Proteomes" id="UP000233100">
    <property type="component" value="Chromosome 11"/>
</dbReference>
<dbReference type="Bgee" id="ENSMFAG00000031019">
    <property type="expression patterns" value="Expressed in lymph node and 13 other cell types or tissues"/>
</dbReference>
<dbReference type="GO" id="GO:0005789">
    <property type="term" value="C:endoplasmic reticulum membrane"/>
    <property type="evidence" value="ECO:0000250"/>
    <property type="project" value="UniProtKB"/>
</dbReference>
<dbReference type="GO" id="GO:0005886">
    <property type="term" value="C:plasma membrane"/>
    <property type="evidence" value="ECO:0000250"/>
    <property type="project" value="UniProtKB"/>
</dbReference>
<dbReference type="GO" id="GO:0004888">
    <property type="term" value="F:transmembrane signaling receptor activity"/>
    <property type="evidence" value="ECO:0007669"/>
    <property type="project" value="Ensembl"/>
</dbReference>
<dbReference type="GO" id="GO:0060218">
    <property type="term" value="P:hematopoietic stem cell differentiation"/>
    <property type="evidence" value="ECO:0000250"/>
    <property type="project" value="UniProtKB"/>
</dbReference>
<dbReference type="GO" id="GO:0090090">
    <property type="term" value="P:negative regulation of canonical Wnt signaling pathway"/>
    <property type="evidence" value="ECO:0000250"/>
    <property type="project" value="UniProtKB"/>
</dbReference>
<dbReference type="GO" id="GO:0006898">
    <property type="term" value="P:receptor-mediated endocytosis"/>
    <property type="evidence" value="ECO:0007669"/>
    <property type="project" value="Ensembl"/>
</dbReference>
<dbReference type="GO" id="GO:0070231">
    <property type="term" value="P:T cell apoptotic process"/>
    <property type="evidence" value="ECO:0000250"/>
    <property type="project" value="UniProtKB"/>
</dbReference>
<dbReference type="GO" id="GO:0030217">
    <property type="term" value="P:T cell differentiation"/>
    <property type="evidence" value="ECO:0000250"/>
    <property type="project" value="UniProtKB"/>
</dbReference>
<dbReference type="GO" id="GO:0042098">
    <property type="term" value="P:T cell proliferation"/>
    <property type="evidence" value="ECO:0000250"/>
    <property type="project" value="UniProtKB"/>
</dbReference>
<dbReference type="GO" id="GO:0016055">
    <property type="term" value="P:Wnt signaling pathway"/>
    <property type="evidence" value="ECO:0007669"/>
    <property type="project" value="UniProtKB-KW"/>
</dbReference>
<dbReference type="InterPro" id="IPR008075">
    <property type="entry name" value="LIMR"/>
</dbReference>
<dbReference type="InterPro" id="IPR006876">
    <property type="entry name" value="LMBR1-like_membr_prot"/>
</dbReference>
<dbReference type="PANTHER" id="PTHR12625">
    <property type="entry name" value="LIPOCALIN-1 INTERACTING MEMBRANE RECEPTOR LIMR"/>
    <property type="match status" value="1"/>
</dbReference>
<dbReference type="PANTHER" id="PTHR12625:SF2">
    <property type="entry name" value="PROTEIN LMBR1L"/>
    <property type="match status" value="1"/>
</dbReference>
<dbReference type="Pfam" id="PF04791">
    <property type="entry name" value="LMBR1"/>
    <property type="match status" value="2"/>
</dbReference>
<dbReference type="PRINTS" id="PR01692">
    <property type="entry name" value="LIPOCALINIMR"/>
</dbReference>
<gene>
    <name type="primary">LMBR1L</name>
    <name type="ORF">QtsA-14131</name>
</gene>
<accession>Q4R7X9</accession>
<keyword id="KW-1003">Cell membrane</keyword>
<keyword id="KW-0254">Endocytosis</keyword>
<keyword id="KW-0256">Endoplasmic reticulum</keyword>
<keyword id="KW-0472">Membrane</keyword>
<keyword id="KW-0675">Receptor</keyword>
<keyword id="KW-1185">Reference proteome</keyword>
<keyword id="KW-0812">Transmembrane</keyword>
<keyword id="KW-1133">Transmembrane helix</keyword>
<keyword id="KW-0879">Wnt signaling pathway</keyword>
<organism>
    <name type="scientific">Macaca fascicularis</name>
    <name type="common">Crab-eating macaque</name>
    <name type="synonym">Cynomolgus monkey</name>
    <dbReference type="NCBI Taxonomy" id="9541"/>
    <lineage>
        <taxon>Eukaryota</taxon>
        <taxon>Metazoa</taxon>
        <taxon>Chordata</taxon>
        <taxon>Craniata</taxon>
        <taxon>Vertebrata</taxon>
        <taxon>Euteleostomi</taxon>
        <taxon>Mammalia</taxon>
        <taxon>Eutheria</taxon>
        <taxon>Euarchontoglires</taxon>
        <taxon>Primates</taxon>
        <taxon>Haplorrhini</taxon>
        <taxon>Catarrhini</taxon>
        <taxon>Cercopithecidae</taxon>
        <taxon>Cercopithecinae</taxon>
        <taxon>Macaca</taxon>
    </lineage>
</organism>